<name>RUVA_MYCCT</name>
<evidence type="ECO:0000255" key="1">
    <source>
        <dbReference type="HAMAP-Rule" id="MF_00031"/>
    </source>
</evidence>
<comment type="function">
    <text evidence="1">The RuvA-RuvB-RuvC complex processes Holliday junction (HJ) DNA during genetic recombination and DNA repair, while the RuvA-RuvB complex plays an important role in the rescue of blocked DNA replication forks via replication fork reversal (RFR). RuvA specifically binds to HJ cruciform DNA, conferring on it an open structure. The RuvB hexamer acts as an ATP-dependent pump, pulling dsDNA into and through the RuvAB complex. HJ branch migration allows RuvC to scan DNA until it finds its consensus sequence, where it cleaves and resolves the cruciform DNA.</text>
</comment>
<comment type="subunit">
    <text evidence="1">Homotetramer. Forms an RuvA(8)-RuvB(12)-Holliday junction (HJ) complex. HJ DNA is sandwiched between 2 RuvA tetramers; dsDNA enters through RuvA and exits via RuvB. An RuvB hexamer assembles on each DNA strand where it exits the tetramer. Each RuvB hexamer is contacted by two RuvA subunits (via domain III) on 2 adjacent RuvB subunits; this complex drives branch migration. In the full resolvosome a probable DNA-RuvA(4)-RuvB(12)-RuvC(2) complex forms which resolves the HJ.</text>
</comment>
<comment type="subcellular location">
    <subcellularLocation>
        <location evidence="1">Cytoplasm</location>
    </subcellularLocation>
</comment>
<comment type="domain">
    <text evidence="1">Has three domains with a flexible linker between the domains II and III and assumes an 'L' shape. Domain III is highly mobile and contacts RuvB.</text>
</comment>
<comment type="similarity">
    <text evidence="1">Belongs to the RuvA family.</text>
</comment>
<protein>
    <recommendedName>
        <fullName evidence="1">Holliday junction branch migration complex subunit RuvA</fullName>
    </recommendedName>
</protein>
<gene>
    <name evidence="1" type="primary">ruvA</name>
    <name type="ordered locus">MCAP_0429</name>
</gene>
<dbReference type="EMBL" id="CP000123">
    <property type="protein sequence ID" value="ABC01169.1"/>
    <property type="molecule type" value="Genomic_DNA"/>
</dbReference>
<dbReference type="RefSeq" id="WP_011387303.1">
    <property type="nucleotide sequence ID" value="NC_007633.1"/>
</dbReference>
<dbReference type="SMR" id="Q2SS60"/>
<dbReference type="GeneID" id="23778615"/>
<dbReference type="KEGG" id="mcp:MCAP_0429"/>
<dbReference type="HOGENOM" id="CLU_087936_3_1_14"/>
<dbReference type="PhylomeDB" id="Q2SS60"/>
<dbReference type="Proteomes" id="UP000001928">
    <property type="component" value="Chromosome"/>
</dbReference>
<dbReference type="GO" id="GO:0005737">
    <property type="term" value="C:cytoplasm"/>
    <property type="evidence" value="ECO:0007669"/>
    <property type="project" value="UniProtKB-SubCell"/>
</dbReference>
<dbReference type="GO" id="GO:0048476">
    <property type="term" value="C:Holliday junction resolvase complex"/>
    <property type="evidence" value="ECO:0007669"/>
    <property type="project" value="UniProtKB-UniRule"/>
</dbReference>
<dbReference type="GO" id="GO:0003678">
    <property type="term" value="F:DNA helicase activity"/>
    <property type="evidence" value="ECO:0007669"/>
    <property type="project" value="InterPro"/>
</dbReference>
<dbReference type="GO" id="GO:0000400">
    <property type="term" value="F:four-way junction DNA binding"/>
    <property type="evidence" value="ECO:0007669"/>
    <property type="project" value="UniProtKB-UniRule"/>
</dbReference>
<dbReference type="GO" id="GO:0006310">
    <property type="term" value="P:DNA recombination"/>
    <property type="evidence" value="ECO:0007669"/>
    <property type="project" value="UniProtKB-UniRule"/>
</dbReference>
<dbReference type="GO" id="GO:0006281">
    <property type="term" value="P:DNA repair"/>
    <property type="evidence" value="ECO:0007669"/>
    <property type="project" value="UniProtKB-UniRule"/>
</dbReference>
<dbReference type="Gene3D" id="1.10.150.20">
    <property type="entry name" value="5' to 3' exonuclease, C-terminal subdomain"/>
    <property type="match status" value="1"/>
</dbReference>
<dbReference type="HAMAP" id="MF_00031">
    <property type="entry name" value="DNA_HJ_migration_RuvA"/>
    <property type="match status" value="1"/>
</dbReference>
<dbReference type="InterPro" id="IPR003583">
    <property type="entry name" value="Hlx-hairpin-Hlx_DNA-bd_motif"/>
</dbReference>
<dbReference type="InterPro" id="IPR012340">
    <property type="entry name" value="NA-bd_OB-fold"/>
</dbReference>
<dbReference type="InterPro" id="IPR000085">
    <property type="entry name" value="RuvA"/>
</dbReference>
<dbReference type="InterPro" id="IPR010994">
    <property type="entry name" value="RuvA_2-like"/>
</dbReference>
<dbReference type="NCBIfam" id="TIGR00084">
    <property type="entry name" value="ruvA"/>
    <property type="match status" value="1"/>
</dbReference>
<dbReference type="Pfam" id="PF14520">
    <property type="entry name" value="HHH_5"/>
    <property type="match status" value="1"/>
</dbReference>
<dbReference type="SMART" id="SM00278">
    <property type="entry name" value="HhH1"/>
    <property type="match status" value="2"/>
</dbReference>
<dbReference type="SUPFAM" id="SSF50249">
    <property type="entry name" value="Nucleic acid-binding proteins"/>
    <property type="match status" value="1"/>
</dbReference>
<dbReference type="SUPFAM" id="SSF47781">
    <property type="entry name" value="RuvA domain 2-like"/>
    <property type="match status" value="1"/>
</dbReference>
<proteinExistence type="inferred from homology"/>
<keyword id="KW-0963">Cytoplasm</keyword>
<keyword id="KW-0227">DNA damage</keyword>
<keyword id="KW-0233">DNA recombination</keyword>
<keyword id="KW-0234">DNA repair</keyword>
<keyword id="KW-0238">DNA-binding</keyword>
<reference key="1">
    <citation type="submission" date="2005-09" db="EMBL/GenBank/DDBJ databases">
        <authorList>
            <person name="Glass J.I."/>
            <person name="Lartigue C."/>
            <person name="Pfannkoch C."/>
            <person name="Baden-Tillson H."/>
            <person name="Smith H.O."/>
            <person name="Venter J.C."/>
            <person name="Roske K."/>
            <person name="Wise K.S."/>
            <person name="Calcutt M.J."/>
            <person name="Nelson W.C."/>
            <person name="Nierman W.C."/>
        </authorList>
    </citation>
    <scope>NUCLEOTIDE SEQUENCE [LARGE SCALE GENOMIC DNA]</scope>
    <source>
        <strain>California kid / ATCC 27343 / NCTC 10154</strain>
    </source>
</reference>
<feature type="chain" id="PRO_1000195162" description="Holliday junction branch migration complex subunit RuvA">
    <location>
        <begin position="1"/>
        <end position="186"/>
    </location>
</feature>
<feature type="region of interest" description="Domain I" evidence="1">
    <location>
        <begin position="1"/>
        <end position="63"/>
    </location>
</feature>
<feature type="region of interest" description="Domain II" evidence="1">
    <location>
        <begin position="64"/>
        <end position="137"/>
    </location>
</feature>
<feature type="region of interest" description="Domain III" evidence="1">
    <location>
        <begin position="137"/>
        <end position="186"/>
    </location>
</feature>
<feature type="region of interest" description="Flexible linker" evidence="1">
    <location>
        <position position="137"/>
    </location>
</feature>
<accession>Q2SS60</accession>
<sequence>MNDYINGFLYKIDDKFLYLELNYLGYRYLYLKSDLKNFKLNENNKVYIAINVIDNHFKYYGFFNQLVRDLFEILININTIGEKTAFLILENYSYQELIDIFKNGKTDKILQLKGIGNYTARLIINSVQKELFNNKISEKKNKVITSLEKLGYKTKDIYKIIINVDEDLTIDELTKYVLEKLSYINN</sequence>
<organism>
    <name type="scientific">Mycoplasma capricolum subsp. capricolum (strain California kid / ATCC 27343 / NCTC 10154)</name>
    <dbReference type="NCBI Taxonomy" id="340047"/>
    <lineage>
        <taxon>Bacteria</taxon>
        <taxon>Bacillati</taxon>
        <taxon>Mycoplasmatota</taxon>
        <taxon>Mollicutes</taxon>
        <taxon>Mycoplasmataceae</taxon>
        <taxon>Mycoplasma</taxon>
    </lineage>
</organism>